<comment type="function">
    <text evidence="1">Hydrolyzes cytidine or uridine to ribose and cytosine or uracil, respectively.</text>
</comment>
<comment type="similarity">
    <text evidence="1">Belongs to the IUNH family. RihA subfamily.</text>
</comment>
<sequence length="311" mass="33902">MALPIMIDCDPGHDDAIALVLALASPELEVKAVTASAGNQTPEKTLRNVLRMLTLLNRPDIPVAGGAWKPLMRDLIIADNVHGESGLDGPSLPEPAFAPQNCTAVELMASVLRESQESVTLVATGPQTNVALLLASHPELHAKIARIVIMGGAMGLGNWQPAAEFNIYVDPQAAEMVFQSGIPVVMAGLDVTHRAQILPADIERFRQIGNPVSTIVAELLDFFMAYHKDEKWGFDGAPLHDPCTIAWLLKPEIFTTIERWVGVETEGKYTQGMTVVDYYHLTGNRPNTTLMLDVDREAFVDLLAQRLAFYA</sequence>
<feature type="chain" id="PRO_1000024396" description="Pyrimidine-specific ribonucleoside hydrolase RihA">
    <location>
        <begin position="1"/>
        <end position="311"/>
    </location>
</feature>
<feature type="active site" evidence="1">
    <location>
        <position position="240"/>
    </location>
</feature>
<keyword id="KW-0326">Glycosidase</keyword>
<keyword id="KW-0378">Hydrolase</keyword>
<protein>
    <recommendedName>
        <fullName evidence="1">Pyrimidine-specific ribonucleoside hydrolase RihA</fullName>
        <ecNumber evidence="1">3.2.-.-</ecNumber>
    </recommendedName>
    <alternativeName>
        <fullName evidence="1">Cytidine/uridine-specific hydrolase</fullName>
    </alternativeName>
</protein>
<proteinExistence type="inferred from homology"/>
<name>RIHA_KLEP7</name>
<accession>A6T9S2</accession>
<reference key="1">
    <citation type="submission" date="2006-09" db="EMBL/GenBank/DDBJ databases">
        <authorList>
            <consortium name="The Klebsiella pneumonia Genome Sequencing Project"/>
            <person name="McClelland M."/>
            <person name="Sanderson E.K."/>
            <person name="Spieth J."/>
            <person name="Clifton W.S."/>
            <person name="Latreille P."/>
            <person name="Sabo A."/>
            <person name="Pepin K."/>
            <person name="Bhonagiri V."/>
            <person name="Porwollik S."/>
            <person name="Ali J."/>
            <person name="Wilson R.K."/>
        </authorList>
    </citation>
    <scope>NUCLEOTIDE SEQUENCE [LARGE SCALE GENOMIC DNA]</scope>
    <source>
        <strain>ATCC 700721 / MGH 78578</strain>
    </source>
</reference>
<dbReference type="EC" id="3.2.-.-" evidence="1"/>
<dbReference type="EMBL" id="CP000647">
    <property type="protein sequence ID" value="ABR77343.1"/>
    <property type="molecule type" value="Genomic_DNA"/>
</dbReference>
<dbReference type="RefSeq" id="WP_015958497.1">
    <property type="nucleotide sequence ID" value="NC_009648.1"/>
</dbReference>
<dbReference type="SMR" id="A6T9S2"/>
<dbReference type="STRING" id="272620.KPN_01912"/>
<dbReference type="PaxDb" id="272620-KPN_01912"/>
<dbReference type="EnsemblBacteria" id="ABR77343">
    <property type="protein sequence ID" value="ABR77343"/>
    <property type="gene ID" value="KPN_01912"/>
</dbReference>
<dbReference type="KEGG" id="kpn:KPN_01912"/>
<dbReference type="HOGENOM" id="CLU_036838_2_0_6"/>
<dbReference type="Proteomes" id="UP000000265">
    <property type="component" value="Chromosome"/>
</dbReference>
<dbReference type="GO" id="GO:0005829">
    <property type="term" value="C:cytosol"/>
    <property type="evidence" value="ECO:0007669"/>
    <property type="project" value="TreeGrafter"/>
</dbReference>
<dbReference type="GO" id="GO:0008477">
    <property type="term" value="F:purine nucleosidase activity"/>
    <property type="evidence" value="ECO:0007669"/>
    <property type="project" value="TreeGrafter"/>
</dbReference>
<dbReference type="GO" id="GO:0045437">
    <property type="term" value="F:uridine nucleosidase activity"/>
    <property type="evidence" value="ECO:0007669"/>
    <property type="project" value="InterPro"/>
</dbReference>
<dbReference type="GO" id="GO:0015949">
    <property type="term" value="P:nucleobase-containing small molecule interconversion"/>
    <property type="evidence" value="ECO:0007669"/>
    <property type="project" value="InterPro"/>
</dbReference>
<dbReference type="GO" id="GO:0006152">
    <property type="term" value="P:purine nucleoside catabolic process"/>
    <property type="evidence" value="ECO:0007669"/>
    <property type="project" value="TreeGrafter"/>
</dbReference>
<dbReference type="GO" id="GO:0006206">
    <property type="term" value="P:pyrimidine nucleobase metabolic process"/>
    <property type="evidence" value="ECO:0007669"/>
    <property type="project" value="UniProtKB-UniRule"/>
</dbReference>
<dbReference type="CDD" id="cd02651">
    <property type="entry name" value="nuc_hydro_IU_UC_XIUA"/>
    <property type="match status" value="1"/>
</dbReference>
<dbReference type="FunFam" id="3.90.245.10:FF:000001">
    <property type="entry name" value="Pyrimidine-specific ribonucleoside hydrolase RihA"/>
    <property type="match status" value="1"/>
</dbReference>
<dbReference type="Gene3D" id="3.90.245.10">
    <property type="entry name" value="Ribonucleoside hydrolase-like"/>
    <property type="match status" value="1"/>
</dbReference>
<dbReference type="HAMAP" id="MF_01431">
    <property type="entry name" value="Pyrim_hydro_RihA"/>
    <property type="match status" value="1"/>
</dbReference>
<dbReference type="InterPro" id="IPR015910">
    <property type="entry name" value="I/U_nuclsd_hydro_CS"/>
</dbReference>
<dbReference type="InterPro" id="IPR001910">
    <property type="entry name" value="Inosine/uridine_hydrolase_dom"/>
</dbReference>
<dbReference type="InterPro" id="IPR023186">
    <property type="entry name" value="IUNH"/>
</dbReference>
<dbReference type="InterPro" id="IPR022975">
    <property type="entry name" value="Pyrim_hydro_RihA"/>
</dbReference>
<dbReference type="InterPro" id="IPR036452">
    <property type="entry name" value="Ribo_hydro-like"/>
</dbReference>
<dbReference type="NCBIfam" id="NF007761">
    <property type="entry name" value="PRK10443.1"/>
    <property type="match status" value="1"/>
</dbReference>
<dbReference type="PANTHER" id="PTHR12304">
    <property type="entry name" value="INOSINE-URIDINE PREFERRING NUCLEOSIDE HYDROLASE"/>
    <property type="match status" value="1"/>
</dbReference>
<dbReference type="PANTHER" id="PTHR12304:SF4">
    <property type="entry name" value="URIDINE NUCLEOSIDASE"/>
    <property type="match status" value="1"/>
</dbReference>
<dbReference type="Pfam" id="PF01156">
    <property type="entry name" value="IU_nuc_hydro"/>
    <property type="match status" value="1"/>
</dbReference>
<dbReference type="SUPFAM" id="SSF53590">
    <property type="entry name" value="Nucleoside hydrolase"/>
    <property type="match status" value="1"/>
</dbReference>
<dbReference type="PROSITE" id="PS01247">
    <property type="entry name" value="IUNH"/>
    <property type="match status" value="1"/>
</dbReference>
<gene>
    <name evidence="1" type="primary">rihA</name>
    <name type="ordered locus">KPN78578_18820</name>
    <name type="ORF">KPN_01912</name>
</gene>
<organism>
    <name type="scientific">Klebsiella pneumoniae subsp. pneumoniae (strain ATCC 700721 / MGH 78578)</name>
    <dbReference type="NCBI Taxonomy" id="272620"/>
    <lineage>
        <taxon>Bacteria</taxon>
        <taxon>Pseudomonadati</taxon>
        <taxon>Pseudomonadota</taxon>
        <taxon>Gammaproteobacteria</taxon>
        <taxon>Enterobacterales</taxon>
        <taxon>Enterobacteriaceae</taxon>
        <taxon>Klebsiella/Raoultella group</taxon>
        <taxon>Klebsiella</taxon>
        <taxon>Klebsiella pneumoniae complex</taxon>
    </lineage>
</organism>
<evidence type="ECO:0000255" key="1">
    <source>
        <dbReference type="HAMAP-Rule" id="MF_01431"/>
    </source>
</evidence>